<organismHost>
    <name type="scientific">Camelus</name>
    <dbReference type="NCBI Taxonomy" id="9836"/>
</organismHost>
<reference key="1">
    <citation type="journal article" date="2002" name="J. Gen. Virol.">
        <title>The sequence of camelpox virus shows it is most closely related to variola virus, the cause of smallpox.</title>
        <authorList>
            <person name="Gubser C."/>
            <person name="Smith G.L."/>
        </authorList>
    </citation>
    <scope>NUCLEOTIDE SEQUENCE [LARGE SCALE GENOMIC DNA]</scope>
</reference>
<proteinExistence type="inferred from homology"/>
<evidence type="ECO:0000250" key="1"/>
<evidence type="ECO:0000255" key="2">
    <source>
        <dbReference type="PROSITE-ProRule" id="PRU00037"/>
    </source>
</evidence>
<sequence>MNNSSELIAVINGFRNSGRFCDIDIVINDERINAHRLILSGASEYFSILFSSDFIDSNKYEVNLSHLDYQSVNDLIDYIYGIPLSLTNDIVKYILSTADFLQIGSAITECENYILKNLCSRNCIDFYIYADKYNNKKIETASFNTILLNILRLINDENFKYLTEESMIKFLSDDMLNIKNEDFAPLILIKWLESTQQPCTVELLRCLRISLLSPQVIKSLYSHRLVGSIYECITFLNNISFLDESFPRYHSIELISIGISNSHDKISINCYNRKKNTWDIISSRRYRCSFAVAVLDNIIYMMGGYDQSPYRSSKVIAYNTCTNSWIYDIPELKYPRSNCGGVADDEYIYCIGGIRDQDSSLISSIDRWKPSKPYWQTYAKIREPKCDMGVAMLNGLIYVIGGVVKGDTCTDTLESLSQDGWMMHQRLPIKMSNMSTIVHAGKIYISGGYNNSSVVNGISNLVLSYNPIYDEWTKLSSLNIPRINPALWSVHNKLYVGGGISDDIQTNTSETYDKEKDCWTLDNGHMLPRNYIMYKCEPIKHKYPLEKTQYTNDFLKYLESFIGS</sequence>
<comment type="function">
    <text>Probable substrate-specific adapter of CUL3-containing E3 ubiquitin-protein ligases which mediate the ubiquitination and subsequent proteasomal degradation of host target proteins.</text>
</comment>
<comment type="subunit">
    <text evidence="1">Interacts (via BTB domain) with host CUL3.</text>
</comment>
<comment type="subcellular location">
    <subcellularLocation>
        <location evidence="1">Host cytoplasm</location>
    </subcellularLocation>
</comment>
<comment type="domain">
    <text evidence="1">The BTB domain is responsible for the interaction with CUL3 while the Kelch repeat domains supposely serve to recruit the cellular substrates.</text>
</comment>
<gene>
    <name type="primary">KBTB1</name>
    <name type="ordered locus">CMP172R</name>
</gene>
<accession>Q8QQ16</accession>
<name>KBTB1_CAMPS</name>
<protein>
    <recommendedName>
        <fullName>Kelch repeat and BTB domain-containing protein 1</fullName>
    </recommendedName>
</protein>
<feature type="chain" id="PRO_0000396134" description="Kelch repeat and BTB domain-containing protein 1">
    <location>
        <begin position="1"/>
        <end position="564"/>
    </location>
</feature>
<feature type="domain" description="BTB" evidence="2">
    <location>
        <begin position="21"/>
        <end position="88"/>
    </location>
</feature>
<feature type="domain" description="BACK">
    <location>
        <begin position="123"/>
        <end position="219"/>
    </location>
</feature>
<feature type="repeat" description="Kelch 1">
    <location>
        <begin position="252"/>
        <end position="297"/>
    </location>
</feature>
<feature type="repeat" description="Kelch 2">
    <location>
        <begin position="298"/>
        <end position="346"/>
    </location>
</feature>
<feature type="repeat" description="Kelch 3">
    <location>
        <begin position="347"/>
        <end position="395"/>
    </location>
</feature>
<feature type="repeat" description="Kelch 4">
    <location>
        <begin position="397"/>
        <end position="441"/>
    </location>
</feature>
<feature type="repeat" description="Kelch 5">
    <location>
        <begin position="442"/>
        <end position="492"/>
    </location>
</feature>
<feature type="repeat" description="Kelch 6">
    <location>
        <begin position="494"/>
        <end position="539"/>
    </location>
</feature>
<organism>
    <name type="scientific">Camelpox virus (strain CMS)</name>
    <dbReference type="NCBI Taxonomy" id="203172"/>
    <lineage>
        <taxon>Viruses</taxon>
        <taxon>Varidnaviria</taxon>
        <taxon>Bamfordvirae</taxon>
        <taxon>Nucleocytoviricota</taxon>
        <taxon>Pokkesviricetes</taxon>
        <taxon>Chitovirales</taxon>
        <taxon>Poxviridae</taxon>
        <taxon>Chordopoxvirinae</taxon>
        <taxon>Orthopoxvirus</taxon>
        <taxon>Camelpox virus</taxon>
    </lineage>
</organism>
<keyword id="KW-1035">Host cytoplasm</keyword>
<keyword id="KW-0945">Host-virus interaction</keyword>
<keyword id="KW-0880">Kelch repeat</keyword>
<keyword id="KW-1123">Modulation of host E3 ubiquitin ligases by virus</keyword>
<keyword id="KW-1130">Modulation of host ubiquitin pathway by virus</keyword>
<keyword id="KW-1185">Reference proteome</keyword>
<keyword id="KW-0677">Repeat</keyword>
<keyword id="KW-0833">Ubl conjugation pathway</keyword>
<dbReference type="EMBL" id="AY009089">
    <property type="protein sequence ID" value="AAG37674.1"/>
    <property type="molecule type" value="Genomic_DNA"/>
</dbReference>
<dbReference type="SMR" id="Q8QQ16"/>
<dbReference type="Proteomes" id="UP000107153">
    <property type="component" value="Genome"/>
</dbReference>
<dbReference type="GO" id="GO:0030430">
    <property type="term" value="C:host cell cytoplasm"/>
    <property type="evidence" value="ECO:0007669"/>
    <property type="project" value="UniProtKB-SubCell"/>
</dbReference>
<dbReference type="GO" id="GO:0039648">
    <property type="term" value="P:symbiont-mediated perturbation of host ubiquitin-like protein modification"/>
    <property type="evidence" value="ECO:0007669"/>
    <property type="project" value="UniProtKB-KW"/>
</dbReference>
<dbReference type="Gene3D" id="1.25.40.420">
    <property type="match status" value="1"/>
</dbReference>
<dbReference type="Gene3D" id="2.120.10.80">
    <property type="entry name" value="Kelch-type beta propeller"/>
    <property type="match status" value="1"/>
</dbReference>
<dbReference type="Gene3D" id="3.30.710.10">
    <property type="entry name" value="Potassium Channel Kv1.1, Chain A"/>
    <property type="match status" value="1"/>
</dbReference>
<dbReference type="InterPro" id="IPR011705">
    <property type="entry name" value="BACK"/>
</dbReference>
<dbReference type="InterPro" id="IPR000210">
    <property type="entry name" value="BTB/POZ_dom"/>
</dbReference>
<dbReference type="InterPro" id="IPR015915">
    <property type="entry name" value="Kelch-typ_b-propeller"/>
</dbReference>
<dbReference type="InterPro" id="IPR006652">
    <property type="entry name" value="Kelch_1"/>
</dbReference>
<dbReference type="InterPro" id="IPR011333">
    <property type="entry name" value="SKP1/BTB/POZ_sf"/>
</dbReference>
<dbReference type="InterPro" id="IPR024182">
    <property type="entry name" value="Vaccinia_A55R"/>
</dbReference>
<dbReference type="PANTHER" id="PTHR45632:SF3">
    <property type="entry name" value="KELCH-LIKE PROTEIN 32"/>
    <property type="match status" value="1"/>
</dbReference>
<dbReference type="PANTHER" id="PTHR45632">
    <property type="entry name" value="LD33804P"/>
    <property type="match status" value="1"/>
</dbReference>
<dbReference type="Pfam" id="PF07707">
    <property type="entry name" value="BACK"/>
    <property type="match status" value="1"/>
</dbReference>
<dbReference type="Pfam" id="PF00651">
    <property type="entry name" value="BTB"/>
    <property type="match status" value="1"/>
</dbReference>
<dbReference type="Pfam" id="PF01344">
    <property type="entry name" value="Kelch_1"/>
    <property type="match status" value="3"/>
</dbReference>
<dbReference type="PIRSF" id="PIRSF003716">
    <property type="entry name" value="VAC_F3L"/>
    <property type="match status" value="1"/>
</dbReference>
<dbReference type="SMART" id="SM00875">
    <property type="entry name" value="BACK"/>
    <property type="match status" value="1"/>
</dbReference>
<dbReference type="SMART" id="SM00225">
    <property type="entry name" value="BTB"/>
    <property type="match status" value="1"/>
</dbReference>
<dbReference type="SMART" id="SM00612">
    <property type="entry name" value="Kelch"/>
    <property type="match status" value="5"/>
</dbReference>
<dbReference type="SUPFAM" id="SSF117281">
    <property type="entry name" value="Kelch motif"/>
    <property type="match status" value="1"/>
</dbReference>
<dbReference type="SUPFAM" id="SSF54695">
    <property type="entry name" value="POZ domain"/>
    <property type="match status" value="1"/>
</dbReference>
<dbReference type="PROSITE" id="PS50097">
    <property type="entry name" value="BTB"/>
    <property type="match status" value="1"/>
</dbReference>